<reference key="1">
    <citation type="journal article" date="2005" name="Proc. Natl. Acad. Sci. U.S.A.">
        <title>The genome of the heartwater agent Ehrlichia ruminantium contains multiple tandem repeats of actively variable copy number.</title>
        <authorList>
            <person name="Collins N.E."/>
            <person name="Liebenberg J."/>
            <person name="de Villiers E.P."/>
            <person name="Brayton K.A."/>
            <person name="Louw E."/>
            <person name="Pretorius A."/>
            <person name="Faber F.E."/>
            <person name="van Heerden H."/>
            <person name="Josemans A."/>
            <person name="van Kleef M."/>
            <person name="Steyn H.C."/>
            <person name="van Strijp M.F."/>
            <person name="Zweygarth E."/>
            <person name="Jongejan F."/>
            <person name="Maillard J.C."/>
            <person name="Berthier D."/>
            <person name="Botha M."/>
            <person name="Joubert F."/>
            <person name="Corton C.H."/>
            <person name="Thomson N.R."/>
            <person name="Allsopp M.T."/>
            <person name="Allsopp B.A."/>
        </authorList>
    </citation>
    <scope>NUCLEOTIDE SEQUENCE [LARGE SCALE GENOMIC DNA]</scope>
    <source>
        <strain>Welgevonden</strain>
    </source>
</reference>
<reference key="2">
    <citation type="journal article" date="2006" name="J. Bacteriol.">
        <title>Comparative genomic analysis of three strains of Ehrlichia ruminantium reveals an active process of genome size plasticity.</title>
        <authorList>
            <person name="Frutos R."/>
            <person name="Viari A."/>
            <person name="Ferraz C."/>
            <person name="Morgat A."/>
            <person name="Eychenie S."/>
            <person name="Kandassamy Y."/>
            <person name="Chantal I."/>
            <person name="Bensaid A."/>
            <person name="Coissac E."/>
            <person name="Vachiery N."/>
            <person name="Demaille J."/>
            <person name="Martinez D."/>
        </authorList>
    </citation>
    <scope>NUCLEOTIDE SEQUENCE [LARGE SCALE GENOMIC DNA]</scope>
    <source>
        <strain>Welgevonden</strain>
    </source>
</reference>
<keyword id="KW-0687">Ribonucleoprotein</keyword>
<keyword id="KW-0689">Ribosomal protein</keyword>
<dbReference type="EMBL" id="CR767821">
    <property type="protein sequence ID" value="CAH58117.1"/>
    <property type="molecule type" value="Genomic_DNA"/>
</dbReference>
<dbReference type="EMBL" id="CR925678">
    <property type="protein sequence ID" value="CAI26902.1"/>
    <property type="status" value="ALT_INIT"/>
    <property type="molecule type" value="Genomic_DNA"/>
</dbReference>
<dbReference type="RefSeq" id="WP_011155077.1">
    <property type="nucleotide sequence ID" value="NC_005295.2"/>
</dbReference>
<dbReference type="SMR" id="Q5HBD4"/>
<dbReference type="GeneID" id="33058015"/>
<dbReference type="KEGG" id="eru:Erum3950"/>
<dbReference type="KEGG" id="erw:ERWE_CDS_04080"/>
<dbReference type="eggNOG" id="COG0257">
    <property type="taxonomic scope" value="Bacteria"/>
</dbReference>
<dbReference type="HOGENOM" id="CLU_135723_3_2_5"/>
<dbReference type="Proteomes" id="UP000001021">
    <property type="component" value="Chromosome"/>
</dbReference>
<dbReference type="GO" id="GO:1990904">
    <property type="term" value="C:ribonucleoprotein complex"/>
    <property type="evidence" value="ECO:0007669"/>
    <property type="project" value="UniProtKB-KW"/>
</dbReference>
<dbReference type="GO" id="GO:0005840">
    <property type="term" value="C:ribosome"/>
    <property type="evidence" value="ECO:0007669"/>
    <property type="project" value="UniProtKB-KW"/>
</dbReference>
<dbReference type="GO" id="GO:0003735">
    <property type="term" value="F:structural constituent of ribosome"/>
    <property type="evidence" value="ECO:0007669"/>
    <property type="project" value="InterPro"/>
</dbReference>
<dbReference type="GO" id="GO:0006412">
    <property type="term" value="P:translation"/>
    <property type="evidence" value="ECO:0007669"/>
    <property type="project" value="UniProtKB-UniRule"/>
</dbReference>
<dbReference type="HAMAP" id="MF_00251">
    <property type="entry name" value="Ribosomal_bL36"/>
    <property type="match status" value="1"/>
</dbReference>
<dbReference type="InterPro" id="IPR000473">
    <property type="entry name" value="Ribosomal_bL36"/>
</dbReference>
<dbReference type="InterPro" id="IPR035977">
    <property type="entry name" value="Ribosomal_bL36_sp"/>
</dbReference>
<dbReference type="InterPro" id="IPR047621">
    <property type="entry name" value="Ribosomal_L36_bact"/>
</dbReference>
<dbReference type="NCBIfam" id="NF002021">
    <property type="entry name" value="PRK00831.1"/>
    <property type="match status" value="1"/>
</dbReference>
<dbReference type="NCBIfam" id="TIGR01022">
    <property type="entry name" value="rpmJ_bact"/>
    <property type="match status" value="1"/>
</dbReference>
<dbReference type="PANTHER" id="PTHR47781">
    <property type="entry name" value="50S RIBOSOMAL PROTEIN L36 2"/>
    <property type="match status" value="1"/>
</dbReference>
<dbReference type="PANTHER" id="PTHR47781:SF1">
    <property type="entry name" value="LARGE RIBOSOMAL SUBUNIT PROTEIN BL36B"/>
    <property type="match status" value="1"/>
</dbReference>
<dbReference type="Pfam" id="PF00444">
    <property type="entry name" value="Ribosomal_L36"/>
    <property type="match status" value="1"/>
</dbReference>
<dbReference type="SUPFAM" id="SSF57840">
    <property type="entry name" value="Ribosomal protein L36"/>
    <property type="match status" value="1"/>
</dbReference>
<dbReference type="PROSITE" id="PS00828">
    <property type="entry name" value="RIBOSOMAL_L36"/>
    <property type="match status" value="1"/>
</dbReference>
<organism>
    <name type="scientific">Ehrlichia ruminantium (strain Welgevonden)</name>
    <dbReference type="NCBI Taxonomy" id="254945"/>
    <lineage>
        <taxon>Bacteria</taxon>
        <taxon>Pseudomonadati</taxon>
        <taxon>Pseudomonadota</taxon>
        <taxon>Alphaproteobacteria</taxon>
        <taxon>Rickettsiales</taxon>
        <taxon>Anaplasmataceae</taxon>
        <taxon>Ehrlichia</taxon>
    </lineage>
</organism>
<feature type="chain" id="PRO_0000344663" description="Large ribosomal subunit protein bL36">
    <location>
        <begin position="1"/>
        <end position="42"/>
    </location>
</feature>
<sequence>MKVIGSLKSAKIRDKDCRVVRRKGRIYVINKKNPRFKARQGY</sequence>
<protein>
    <recommendedName>
        <fullName evidence="1">Large ribosomal subunit protein bL36</fullName>
    </recommendedName>
    <alternativeName>
        <fullName evidence="2">50S ribosomal protein L36</fullName>
    </alternativeName>
</protein>
<name>RL36_EHRRW</name>
<comment type="similarity">
    <text evidence="1">Belongs to the bacterial ribosomal protein bL36 family.</text>
</comment>
<comment type="sequence caution" evidence="2">
    <conflict type="erroneous initiation">
        <sequence resource="EMBL-CDS" id="CAI26902"/>
    </conflict>
</comment>
<gene>
    <name evidence="1" type="primary">rpmJ</name>
    <name type="ordered locus">Erum3950</name>
    <name type="ordered locus">ERWE_CDS_04080</name>
</gene>
<evidence type="ECO:0000255" key="1">
    <source>
        <dbReference type="HAMAP-Rule" id="MF_00251"/>
    </source>
</evidence>
<evidence type="ECO:0000305" key="2"/>
<proteinExistence type="inferred from homology"/>
<accession>Q5HBD4</accession>
<accession>Q5FDS7</accession>